<comment type="function">
    <text evidence="1">Transcription factor involved in regulation of RNA polymerase II-dependent transcription. Also involved in regulation of mitochondrial DNA recombination, maintenance and repair, and generation of homoplasmic cells (By similarity).</text>
</comment>
<comment type="subcellular location">
    <subcellularLocation>
        <location evidence="1">Nucleus</location>
    </subcellularLocation>
    <subcellularLocation>
        <location evidence="1">Mitochondrion</location>
    </subcellularLocation>
</comment>
<comment type="similarity">
    <text evidence="2">Belongs to the mitochondrion-specific ribosomal protein mL67 family.</text>
</comment>
<proteinExistence type="inferred from homology"/>
<accession>Q75EZ5</accession>
<gene>
    <name type="primary">MHR1</name>
    <name type="ordered locus">AAL067W</name>
</gene>
<evidence type="ECO:0000250" key="1"/>
<evidence type="ECO:0000305" key="2"/>
<sequence length="213" mass="24716">MSKTVGASRFRPAGWLQRAGYAPQVFVFRNLESGQVIYSQLPTFTERQINKNFYRPNWENRKPSTRPDIWKCMAVVDLASHEESVRLYQNLCRLRYLREVPQRKAAEQLRKRNEFGHIWYSAQYRPTYTQEAVADLRECLLRARGGATVHWEDPWRMGDRAKHWAALPAVQHQFLPRMANVAREESAILKQLGERAKRAFAAPAPPAPAPQSL</sequence>
<organism>
    <name type="scientific">Eremothecium gossypii (strain ATCC 10895 / CBS 109.51 / FGSC 9923 / NRRL Y-1056)</name>
    <name type="common">Yeast</name>
    <name type="synonym">Ashbya gossypii</name>
    <dbReference type="NCBI Taxonomy" id="284811"/>
    <lineage>
        <taxon>Eukaryota</taxon>
        <taxon>Fungi</taxon>
        <taxon>Dikarya</taxon>
        <taxon>Ascomycota</taxon>
        <taxon>Saccharomycotina</taxon>
        <taxon>Saccharomycetes</taxon>
        <taxon>Saccharomycetales</taxon>
        <taxon>Saccharomycetaceae</taxon>
        <taxon>Eremothecium</taxon>
    </lineage>
</organism>
<dbReference type="EMBL" id="AE016814">
    <property type="protein sequence ID" value="AAS50299.1"/>
    <property type="molecule type" value="Genomic_DNA"/>
</dbReference>
<dbReference type="RefSeq" id="NP_982475.1">
    <property type="nucleotide sequence ID" value="NM_207828.1"/>
</dbReference>
<dbReference type="SMR" id="Q75EZ5"/>
<dbReference type="FunCoup" id="Q75EZ5">
    <property type="interactions" value="171"/>
</dbReference>
<dbReference type="STRING" id="284811.Q75EZ5"/>
<dbReference type="EnsemblFungi" id="AAS50299">
    <property type="protein sequence ID" value="AAS50299"/>
    <property type="gene ID" value="AGOS_AAL067W"/>
</dbReference>
<dbReference type="GeneID" id="4618675"/>
<dbReference type="KEGG" id="ago:AGOS_AAL067W"/>
<dbReference type="eggNOG" id="ENOG502QSKX">
    <property type="taxonomic scope" value="Eukaryota"/>
</dbReference>
<dbReference type="HOGENOM" id="CLU_092898_0_0_1"/>
<dbReference type="InParanoid" id="Q75EZ5"/>
<dbReference type="OMA" id="YRPTYTQ"/>
<dbReference type="OrthoDB" id="5333655at2759"/>
<dbReference type="Proteomes" id="UP000000591">
    <property type="component" value="Chromosome I"/>
</dbReference>
<dbReference type="GO" id="GO:0005762">
    <property type="term" value="C:mitochondrial large ribosomal subunit"/>
    <property type="evidence" value="ECO:0007669"/>
    <property type="project" value="EnsemblFungi"/>
</dbReference>
<dbReference type="GO" id="GO:0005739">
    <property type="term" value="C:mitochondrion"/>
    <property type="evidence" value="ECO:0000318"/>
    <property type="project" value="GO_Central"/>
</dbReference>
<dbReference type="GO" id="GO:0005634">
    <property type="term" value="C:nucleus"/>
    <property type="evidence" value="ECO:0007669"/>
    <property type="project" value="UniProtKB-SubCell"/>
</dbReference>
<dbReference type="GO" id="GO:0000150">
    <property type="term" value="F:DNA strand exchange activity"/>
    <property type="evidence" value="ECO:0007669"/>
    <property type="project" value="EnsemblFungi"/>
</dbReference>
<dbReference type="GO" id="GO:0003697">
    <property type="term" value="F:single-stranded DNA binding"/>
    <property type="evidence" value="ECO:0007669"/>
    <property type="project" value="EnsemblFungi"/>
</dbReference>
<dbReference type="GO" id="GO:0003735">
    <property type="term" value="F:structural constituent of ribosome"/>
    <property type="evidence" value="ECO:0000318"/>
    <property type="project" value="GO_Central"/>
</dbReference>
<dbReference type="GO" id="GO:0034599">
    <property type="term" value="P:cellular response to oxidative stress"/>
    <property type="evidence" value="ECO:0007669"/>
    <property type="project" value="EnsemblFungi"/>
</dbReference>
<dbReference type="GO" id="GO:0000002">
    <property type="term" value="P:mitochondrial genome maintenance"/>
    <property type="evidence" value="ECO:0007669"/>
    <property type="project" value="EnsemblFungi"/>
</dbReference>
<dbReference type="GO" id="GO:0090297">
    <property type="term" value="P:positive regulation of mitochondrial DNA replication"/>
    <property type="evidence" value="ECO:0007669"/>
    <property type="project" value="EnsemblFungi"/>
</dbReference>
<dbReference type="GO" id="GO:0006355">
    <property type="term" value="P:regulation of DNA-templated transcription"/>
    <property type="evidence" value="ECO:0007669"/>
    <property type="project" value="EnsemblFungi"/>
</dbReference>
<dbReference type="InterPro" id="IPR024629">
    <property type="entry name" value="Ribosomal_mL67"/>
</dbReference>
<dbReference type="PANTHER" id="PTHR28184:SF1">
    <property type="entry name" value="LARGE RIBOSOMAL SUBUNIT PROTEIN ML67"/>
    <property type="match status" value="1"/>
</dbReference>
<dbReference type="PANTHER" id="PTHR28184">
    <property type="entry name" value="MITOCHONDRIAL HOMOLOGOUS RECOMBINATION PROTEIN 1"/>
    <property type="match status" value="1"/>
</dbReference>
<dbReference type="Pfam" id="PF12829">
    <property type="entry name" value="Mhr1"/>
    <property type="match status" value="1"/>
</dbReference>
<feature type="chain" id="PRO_0000255961" description="Large ribosomal subunit protein mL67">
    <location>
        <begin position="1"/>
        <end position="213"/>
    </location>
</feature>
<name>MHR1_EREGS</name>
<keyword id="KW-0496">Mitochondrion</keyword>
<keyword id="KW-0539">Nucleus</keyword>
<keyword id="KW-1185">Reference proteome</keyword>
<keyword id="KW-0687">Ribonucleoprotein</keyword>
<keyword id="KW-0689">Ribosomal protein</keyword>
<keyword id="KW-0804">Transcription</keyword>
<keyword id="KW-0805">Transcription regulation</keyword>
<protein>
    <recommendedName>
        <fullName evidence="2">Large ribosomal subunit protein mL67</fullName>
    </recommendedName>
    <alternativeName>
        <fullName>Mitochondrial homologous recombination protein 1</fullName>
    </alternativeName>
</protein>
<reference key="1">
    <citation type="journal article" date="2004" name="Science">
        <title>The Ashbya gossypii genome as a tool for mapping the ancient Saccharomyces cerevisiae genome.</title>
        <authorList>
            <person name="Dietrich F.S."/>
            <person name="Voegeli S."/>
            <person name="Brachat S."/>
            <person name="Lerch A."/>
            <person name="Gates K."/>
            <person name="Steiner S."/>
            <person name="Mohr C."/>
            <person name="Poehlmann R."/>
            <person name="Luedi P."/>
            <person name="Choi S."/>
            <person name="Wing R.A."/>
            <person name="Flavier A."/>
            <person name="Gaffney T.D."/>
            <person name="Philippsen P."/>
        </authorList>
    </citation>
    <scope>NUCLEOTIDE SEQUENCE [LARGE SCALE GENOMIC DNA]</scope>
    <source>
        <strain>ATCC 10895 / CBS 109.51 / FGSC 9923 / NRRL Y-1056</strain>
    </source>
</reference>
<reference key="2">
    <citation type="journal article" date="2013" name="G3 (Bethesda)">
        <title>Genomes of Ashbya fungi isolated from insects reveal four mating-type loci, numerous translocations, lack of transposons, and distinct gene duplications.</title>
        <authorList>
            <person name="Dietrich F.S."/>
            <person name="Voegeli S."/>
            <person name="Kuo S."/>
            <person name="Philippsen P."/>
        </authorList>
    </citation>
    <scope>GENOME REANNOTATION</scope>
    <source>
        <strain>ATCC 10895 / CBS 109.51 / FGSC 9923 / NRRL Y-1056</strain>
    </source>
</reference>